<evidence type="ECO:0000250" key="1"/>
<evidence type="ECO:0000256" key="2">
    <source>
        <dbReference type="SAM" id="MobiDB-lite"/>
    </source>
</evidence>
<evidence type="ECO:0000305" key="3"/>
<proteinExistence type="inferred from homology"/>
<comment type="function">
    <text evidence="1">Involved in the biosynthesis of mycocyclosin. It uses activated amino acids in the form of aminoacyl-tRNAs (aa-tRNAs) as substrates to catalyze the ATP-independent formation of cyclodipeptides which are intermediates in diketopiperazine (DKP) biosynthetic pathways. Catalyzes the formation of cyclo(L-Tyr-L-Tyr) (cYY) from L-tyrosyl-tRNA(Tyr) (By similarity).</text>
</comment>
<comment type="catalytic activity">
    <reaction>
        <text>2 L-tyrosyl-tRNA(Tyr) = cyclo(L-tyrosyl-L-tyrosyl) + 2 tRNA(Tyr)</text>
        <dbReference type="Rhea" id="RHEA:46448"/>
        <dbReference type="Rhea" id="RHEA-COMP:9706"/>
        <dbReference type="Rhea" id="RHEA-COMP:9707"/>
        <dbReference type="ChEBI" id="CHEBI:65063"/>
        <dbReference type="ChEBI" id="CHEBI:78442"/>
        <dbReference type="ChEBI" id="CHEBI:78536"/>
        <dbReference type="EC" id="2.3.2.21"/>
    </reaction>
</comment>
<comment type="subunit">
    <text evidence="1">Homodimer.</text>
</comment>
<comment type="similarity">
    <text evidence="3">Belongs to the CDPS family.</text>
</comment>
<name>CDTS_MYCTO</name>
<sequence>MSYVAAEPGVLISPTDDLQSPRSAPAAHDENADGITGGTRDDSAPNSRFQLGRRIPEATAQEGFLVRPFTQQCQIIHTEGDHAVIGVSPGNSYFSRQRLRDLGLWGLTNFDRVDFVYTDVHVAESYEALGDSAIEARRKAVKNIRGVRAKITTTVNELDPAGARLCVRPMSEFQSNEAYRELHADLLTRLKDDEDLRAVCQDLVRRFLSTKVGPRQGATATQEQVCMDYICAEAPLFLDTPAILGVPSSLNCYHQSLPLAEMLYARGSGLRASRNQGHAIVTPDGSPAE</sequence>
<feature type="chain" id="PRO_0000426959" description="Cyclo(L-tyrosyl-L-tyrosyl) synthase">
    <location>
        <begin position="1"/>
        <end position="289"/>
    </location>
</feature>
<feature type="region of interest" description="Disordered" evidence="2">
    <location>
        <begin position="1"/>
        <end position="48"/>
    </location>
</feature>
<feature type="active site" description="Nucleophile" evidence="1">
    <location>
        <position position="88"/>
    </location>
</feature>
<feature type="binding site" evidence="1">
    <location>
        <position position="91"/>
    </location>
    <ligand>
        <name>substrate</name>
    </ligand>
</feature>
<feature type="binding site" evidence="1">
    <location>
        <begin position="229"/>
        <end position="233"/>
    </location>
    <ligand>
        <name>substrate</name>
    </ligand>
</feature>
<feature type="binding site" evidence="1">
    <location>
        <position position="253"/>
    </location>
    <ligand>
        <name>substrate</name>
    </ligand>
</feature>
<feature type="site" description="Could have a critical role in the catalytic mechanism" evidence="1">
    <location>
        <position position="91"/>
    </location>
</feature>
<feature type="site" description="Could be involved in aa-tRNA binding" evidence="1">
    <location>
        <position position="139"/>
    </location>
</feature>
<feature type="site" description="Could be involved in aa-tRNA binding" evidence="1">
    <location>
        <position position="229"/>
    </location>
</feature>
<feature type="site" description="Could have a critical role in the catalytic mechanism" evidence="1">
    <location>
        <position position="233"/>
    </location>
</feature>
<organism>
    <name type="scientific">Mycobacterium tuberculosis (strain CDC 1551 / Oshkosh)</name>
    <dbReference type="NCBI Taxonomy" id="83331"/>
    <lineage>
        <taxon>Bacteria</taxon>
        <taxon>Bacillati</taxon>
        <taxon>Actinomycetota</taxon>
        <taxon>Actinomycetes</taxon>
        <taxon>Mycobacteriales</taxon>
        <taxon>Mycobacteriaceae</taxon>
        <taxon>Mycobacterium</taxon>
        <taxon>Mycobacterium tuberculosis complex</taxon>
    </lineage>
</organism>
<accession>P9WPF8</accession>
<accession>Q50688</accession>
<accession>Q7D7C6</accession>
<dbReference type="EC" id="2.3.2.21"/>
<dbReference type="EMBL" id="AE000516">
    <property type="protein sequence ID" value="AAK46619.1"/>
    <property type="molecule type" value="Genomic_DNA"/>
</dbReference>
<dbReference type="PIR" id="G70730">
    <property type="entry name" value="G70730"/>
</dbReference>
<dbReference type="SMR" id="P9WPF8"/>
<dbReference type="KEGG" id="mtc:MT2335"/>
<dbReference type="PATRIC" id="fig|83331.31.peg.2512"/>
<dbReference type="HOGENOM" id="CLU_084186_0_0_11"/>
<dbReference type="Proteomes" id="UP000001020">
    <property type="component" value="Chromosome"/>
</dbReference>
<dbReference type="GO" id="GO:0016755">
    <property type="term" value="F:aminoacyltransferase activity"/>
    <property type="evidence" value="ECO:0007669"/>
    <property type="project" value="InterPro"/>
</dbReference>
<dbReference type="Gene3D" id="3.40.50.11710">
    <property type="entry name" value="Cyclodipeptide synthase"/>
    <property type="match status" value="1"/>
</dbReference>
<dbReference type="InterPro" id="IPR030903">
    <property type="entry name" value="CDPS"/>
</dbReference>
<dbReference type="InterPro" id="IPR038622">
    <property type="entry name" value="CDPS_sf"/>
</dbReference>
<dbReference type="NCBIfam" id="TIGR04539">
    <property type="entry name" value="tRNA_cyclodipep"/>
    <property type="match status" value="1"/>
</dbReference>
<dbReference type="Pfam" id="PF16715">
    <property type="entry name" value="CDPS"/>
    <property type="match status" value="1"/>
</dbReference>
<protein>
    <recommendedName>
        <fullName>Cyclo(L-tyrosyl-L-tyrosyl) synthase</fullName>
        <ecNumber>2.3.2.21</ecNumber>
    </recommendedName>
    <alternativeName>
        <fullName>Cyclodipeptide synthase</fullName>
        <shortName>CDPS</shortName>
    </alternativeName>
    <alternativeName>
        <fullName>Cyclodityrosine synthase</fullName>
    </alternativeName>
</protein>
<gene>
    <name type="ordered locus">MT2335</name>
</gene>
<reference key="1">
    <citation type="journal article" date="2002" name="J. Bacteriol.">
        <title>Whole-genome comparison of Mycobacterium tuberculosis clinical and laboratory strains.</title>
        <authorList>
            <person name="Fleischmann R.D."/>
            <person name="Alland D."/>
            <person name="Eisen J.A."/>
            <person name="Carpenter L."/>
            <person name="White O."/>
            <person name="Peterson J.D."/>
            <person name="DeBoy R.T."/>
            <person name="Dodson R.J."/>
            <person name="Gwinn M.L."/>
            <person name="Haft D.H."/>
            <person name="Hickey E.K."/>
            <person name="Kolonay J.F."/>
            <person name="Nelson W.C."/>
            <person name="Umayam L.A."/>
            <person name="Ermolaeva M.D."/>
            <person name="Salzberg S.L."/>
            <person name="Delcher A."/>
            <person name="Utterback T.R."/>
            <person name="Weidman J.F."/>
            <person name="Khouri H.M."/>
            <person name="Gill J."/>
            <person name="Mikula A."/>
            <person name="Bishai W."/>
            <person name="Jacobs W.R. Jr."/>
            <person name="Venter J.C."/>
            <person name="Fraser C.M."/>
        </authorList>
    </citation>
    <scope>NUCLEOTIDE SEQUENCE [LARGE SCALE GENOMIC DNA]</scope>
    <source>
        <strain>CDC 1551 / Oshkosh</strain>
    </source>
</reference>
<keyword id="KW-1185">Reference proteome</keyword>
<keyword id="KW-0808">Transferase</keyword>